<name>COA7_HUMAN</name>
<comment type="function">
    <text evidence="3">Required for assembly of mitochondrial respiratory chain complex I and complex IV.</text>
</comment>
<comment type="subunit">
    <text evidence="6">Interacts with CHCHD4/MIA40 through transient intermolecular disulfide bonds.</text>
</comment>
<comment type="interaction">
    <interactant intactId="EBI-6269632">
        <id>Q96BR5</id>
    </interactant>
    <interactant intactId="EBI-718729">
        <id>P55212</id>
        <label>CASP6</label>
    </interactant>
    <organismsDiffer>false</organismsDiffer>
    <experiments>3</experiments>
</comment>
<comment type="interaction">
    <interactant intactId="EBI-6269632">
        <id>Q96BR5</id>
    </interactant>
    <interactant intactId="EBI-446479">
        <id>P99999</id>
        <label>CYCS</label>
    </interactant>
    <organismsDiffer>false</organismsDiffer>
    <experiments>3</experiments>
</comment>
<comment type="interaction">
    <interactant intactId="EBI-6269632">
        <id>Q96BR5</id>
    </interactant>
    <interactant intactId="EBI-10976677">
        <id>G5E9A7</id>
        <label>DMWD</label>
    </interactant>
    <organismsDiffer>false</organismsDiffer>
    <experiments>3</experiments>
</comment>
<comment type="interaction">
    <interactant intactId="EBI-6269632">
        <id>Q96BR5</id>
    </interactant>
    <interactant intactId="EBI-744099">
        <id>Q9H0I2</id>
        <label>ENKD1</label>
    </interactant>
    <organismsDiffer>false</organismsDiffer>
    <experiments>3</experiments>
</comment>
<comment type="interaction">
    <interactant intactId="EBI-6269632">
        <id>Q96BR5</id>
    </interactant>
    <interactant intactId="EBI-348399">
        <id>P22607</id>
        <label>FGFR3</label>
    </interactant>
    <organismsDiffer>false</organismsDiffer>
    <experiments>3</experiments>
</comment>
<comment type="interaction">
    <interactant intactId="EBI-6269632">
        <id>Q96BR5</id>
    </interactant>
    <interactant intactId="EBI-347538">
        <id>Q9Y4H4</id>
        <label>GPSM3</label>
    </interactant>
    <organismsDiffer>false</organismsDiffer>
    <experiments>3</experiments>
</comment>
<comment type="interaction">
    <interactant intactId="EBI-6269632">
        <id>Q96BR5</id>
    </interactant>
    <interactant intactId="EBI-351506">
        <id>P06396</id>
        <label>GSN</label>
    </interactant>
    <organismsDiffer>false</organismsDiffer>
    <experiments>3</experiments>
</comment>
<comment type="interaction">
    <interactant intactId="EBI-6269632">
        <id>Q96BR5</id>
    </interactant>
    <interactant intactId="EBI-712096">
        <id>P30519</id>
        <label>HMOX2</label>
    </interactant>
    <organismsDiffer>false</organismsDiffer>
    <experiments>3</experiments>
</comment>
<comment type="interaction">
    <interactant intactId="EBI-6269632">
        <id>Q96BR5</id>
    </interactant>
    <interactant intactId="EBI-21591415">
        <id>P13473-2</id>
        <label>LAMP2</label>
    </interactant>
    <organismsDiffer>false</organismsDiffer>
    <experiments>3</experiments>
</comment>
<comment type="interaction">
    <interactant intactId="EBI-6269632">
        <id>Q96BR5</id>
    </interactant>
    <interactant intactId="EBI-50433196">
        <id>A0A6Q8PF08</id>
        <label>PMP22</label>
    </interactant>
    <organismsDiffer>false</organismsDiffer>
    <experiments>3</experiments>
</comment>
<comment type="interaction">
    <interactant intactId="EBI-6269632">
        <id>Q96BR5</id>
    </interactant>
    <interactant intactId="EBI-5280197">
        <id>O75400-2</id>
        <label>PRPF40A</label>
    </interactant>
    <organismsDiffer>false</organismsDiffer>
    <experiments>3</experiments>
</comment>
<comment type="interaction">
    <interactant intactId="EBI-6269632">
        <id>Q96BR5</id>
    </interactant>
    <interactant intactId="EBI-286642">
        <id>P62826</id>
        <label>RAN</label>
    </interactant>
    <organismsDiffer>false</organismsDiffer>
    <experiments>3</experiments>
</comment>
<comment type="interaction">
    <interactant intactId="EBI-6269632">
        <id>Q96BR5</id>
    </interactant>
    <interactant intactId="EBI-372475">
        <id>P14678-2</id>
        <label>SNRPB</label>
    </interactant>
    <organismsDiffer>false</organismsDiffer>
    <experiments>3</experiments>
</comment>
<comment type="interaction">
    <interactant intactId="EBI-6269632">
        <id>Q96BR5</id>
    </interactant>
    <interactant intactId="EBI-5235340">
        <id>Q7Z699</id>
        <label>SPRED1</label>
    </interactant>
    <organismsDiffer>false</organismsDiffer>
    <experiments>3</experiments>
</comment>
<comment type="interaction">
    <interactant intactId="EBI-6269632">
        <id>Q96BR5</id>
    </interactant>
    <interactant intactId="EBI-3921347">
        <id>P51687</id>
        <label>SUOX</label>
    </interactant>
    <organismsDiffer>false</organismsDiffer>
    <experiments>3</experiments>
</comment>
<comment type="interaction">
    <interactant intactId="EBI-6269632">
        <id>Q96BR5</id>
    </interactant>
    <interactant intactId="EBI-11741437">
        <id>Q08117-2</id>
        <label>TLE5</label>
    </interactant>
    <organismsDiffer>false</organismsDiffer>
    <experiments>3</experiments>
</comment>
<comment type="interaction">
    <interactant intactId="EBI-6269632">
        <id>Q96BR5</id>
    </interactant>
    <interactant intactId="EBI-25900580">
        <id>Q9Y649</id>
    </interactant>
    <organismsDiffer>false</organismsDiffer>
    <experiments>3</experiments>
</comment>
<comment type="subcellular location">
    <subcellularLocation>
        <location evidence="3 6">Mitochondrion intermembrane space</location>
    </subcellularLocation>
    <text evidence="6">The import in the mitochondrion intermembrane space is mediated by CHCHD4/MIA40.</text>
</comment>
<comment type="disease" evidence="4 5 6">
    <disease id="DI-05534">
        <name>Spinocerebellar ataxia, autosomal recessive, with axonal neuropathy 3</name>
        <acronym>SCAN3</acronym>
        <description>A form of spinocerebellar ataxia, a clinically and genetically heterogeneous group of cerebellar disorders due to degeneration of the cerebellum with variable involvement of the brainstem and spinal cord. SCAN3 is an autosomal recessive disorder characterized by onset in the first decade of slowly progressive distal muscle weakness and atrophy and distal sensory impairment due to an axonal peripheral neuropathy. Affected individuals have gait disturbances and sometimes manual dexterity difficulties, as well as cerebellar ataxia associated with cerebellar atrophy on brain imaging.</description>
        <dbReference type="MIM" id="618387"/>
    </disease>
    <text>The disease is caused by variants affecting the gene represented in this entry.</text>
</comment>
<comment type="similarity">
    <text evidence="7">Belongs to the hcp beta-lactamase family.</text>
</comment>
<accession>Q96BR5</accession>
<accession>Q0P6I7</accession>
<accession>Q9H9Z9</accession>
<evidence type="ECO:0000269" key="1">
    <source>
    </source>
</evidence>
<evidence type="ECO:0000269" key="2">
    <source>
    </source>
</evidence>
<evidence type="ECO:0000269" key="3">
    <source>
    </source>
</evidence>
<evidence type="ECO:0000269" key="4">
    <source>
    </source>
</evidence>
<evidence type="ECO:0000269" key="5">
    <source>
    </source>
</evidence>
<evidence type="ECO:0000269" key="6">
    <source>
    </source>
</evidence>
<evidence type="ECO:0000305" key="7"/>
<evidence type="ECO:0007744" key="8">
    <source>
    </source>
</evidence>
<evidence type="ECO:0007829" key="9">
    <source>
        <dbReference type="PDB" id="7MQZ"/>
    </source>
</evidence>
<feature type="initiator methionine" description="Removed" evidence="8">
    <location>
        <position position="1"/>
    </location>
</feature>
<feature type="chain" id="PRO_0000282364" description="Cytochrome c oxidase assembly factor 7">
    <location>
        <begin position="2"/>
        <end position="231"/>
    </location>
</feature>
<feature type="repeat" description="Sel1-like 1">
    <location>
        <begin position="34"/>
        <end position="66"/>
    </location>
</feature>
<feature type="repeat" description="Sel1-like 2">
    <location>
        <begin position="68"/>
        <end position="104"/>
    </location>
</feature>
<feature type="repeat" description="Sel1-like 3">
    <location>
        <begin position="108"/>
        <end position="146"/>
    </location>
</feature>
<feature type="repeat" description="Sel1-like 4">
    <location>
        <begin position="147"/>
        <end position="183"/>
    </location>
</feature>
<feature type="repeat" description="Sel1-like 5">
    <location>
        <begin position="184"/>
        <end position="219"/>
    </location>
</feature>
<feature type="modified residue" description="N-acetylalanine" evidence="8">
    <location>
        <position position="2"/>
    </location>
</feature>
<feature type="sequence variant" id="VAR_082218" description="In SCAN3; dbSNP:rs780572767." evidence="5">
    <original>D</original>
    <variation>G</variation>
    <location>
        <position position="6"/>
    </location>
</feature>
<feature type="sequence variant" id="VAR_082219" description="In SCAN3; uncertain significance; dbSNP:rs768084335." evidence="5">
    <original>R</original>
    <variation>W</variation>
    <location>
        <position position="39"/>
    </location>
</feature>
<feature type="sequence variant" id="VAR_082220" description="In SCAN3; results in increased proteasomal degradation; decreased protein levels; decreased amount of protein imported in the mitochondrion intermembrane space; dbSNP:rs961876891." evidence="4 6">
    <original>Y</original>
    <variation>C</variation>
    <location>
        <position position="137"/>
    </location>
</feature>
<feature type="sequence variant" id="VAR_082221" description="In SCAN3; uncertain significance; dbSNP:rs1558102448." evidence="5">
    <original>S</original>
    <variation>I</variation>
    <location>
        <position position="149"/>
    </location>
</feature>
<feature type="sequence variant" id="VAR_031401" description="In dbSNP:rs443751." evidence="1 2">
    <original>K</original>
    <variation>R</variation>
    <location>
        <position position="219"/>
    </location>
</feature>
<feature type="sequence conflict" description="In Ref. 1; BAB14063." evidence="7" ref="1">
    <original>Y</original>
    <variation>H</variation>
    <location>
        <position position="77"/>
    </location>
</feature>
<feature type="helix" evidence="9">
    <location>
        <begin position="11"/>
        <end position="29"/>
    </location>
</feature>
<feature type="helix" evidence="9">
    <location>
        <begin position="34"/>
        <end position="46"/>
    </location>
</feature>
<feature type="helix" evidence="9">
    <location>
        <begin position="51"/>
        <end position="63"/>
    </location>
</feature>
<feature type="helix" evidence="9">
    <location>
        <begin position="68"/>
        <end position="80"/>
    </location>
</feature>
<feature type="helix" evidence="9">
    <location>
        <begin position="82"/>
        <end position="84"/>
    </location>
</feature>
<feature type="helix" evidence="9">
    <location>
        <begin position="89"/>
        <end position="101"/>
    </location>
</feature>
<feature type="helix" evidence="9">
    <location>
        <begin position="107"/>
        <end position="120"/>
    </location>
</feature>
<feature type="helix" evidence="9">
    <location>
        <begin position="131"/>
        <end position="143"/>
    </location>
</feature>
<feature type="helix" evidence="9">
    <location>
        <begin position="147"/>
        <end position="159"/>
    </location>
</feature>
<feature type="helix" evidence="9">
    <location>
        <begin position="168"/>
        <end position="181"/>
    </location>
</feature>
<feature type="helix" evidence="9">
    <location>
        <begin position="184"/>
        <end position="194"/>
    </location>
</feature>
<feature type="turn" evidence="9">
    <location>
        <begin position="195"/>
        <end position="197"/>
    </location>
</feature>
<feature type="strand" evidence="9">
    <location>
        <begin position="198"/>
        <end position="200"/>
    </location>
</feature>
<feature type="helix" evidence="9">
    <location>
        <begin position="204"/>
        <end position="216"/>
    </location>
</feature>
<sequence length="231" mass="25709">MAGMVDFQDEEQVKSFLENMEVECNYHCYHEKDPDGCYRLVDYLEGIRKNFDEAAKVLKFNCEENQHSDSCYKLGAYYVTGKGGLTQDLKAAARCFLMACEKPGKKSIAACHNVGLLAHDGQVNEDGQPDLGKARDYYTRACDGGYTSSCFNLSAMFLQGAPGFPKDMDLACKYSMKACDLGHIWACANASRMYKLGDGVDKDEAKAEVLKNRAQQLHKEQQKGVQPLTFG</sequence>
<protein>
    <recommendedName>
        <fullName>Cytochrome c oxidase assembly factor 7</fullName>
    </recommendedName>
    <alternativeName>
        <fullName>Beta-lactamase hcp-like protein</fullName>
    </alternativeName>
    <alternativeName>
        <fullName>Respiratory chain assembly factor 1</fullName>
    </alternativeName>
    <alternativeName>
        <fullName>Sel1 repeat-containing protein 1</fullName>
    </alternativeName>
</protein>
<dbReference type="EMBL" id="AK022501">
    <property type="protein sequence ID" value="BAB14063.1"/>
    <property type="molecule type" value="mRNA"/>
</dbReference>
<dbReference type="EMBL" id="AC099784">
    <property type="status" value="NOT_ANNOTATED_CDS"/>
    <property type="molecule type" value="Genomic_DNA"/>
</dbReference>
<dbReference type="EMBL" id="BC015313">
    <property type="protein sequence ID" value="AAH15313.1"/>
    <property type="molecule type" value="mRNA"/>
</dbReference>
<dbReference type="CCDS" id="CCDS570.1"/>
<dbReference type="RefSeq" id="NP_075565.2">
    <property type="nucleotide sequence ID" value="NM_023077.3"/>
</dbReference>
<dbReference type="PDB" id="7MQZ">
    <property type="method" value="X-ray"/>
    <property type="resolution" value="2.39 A"/>
    <property type="chains" value="A=1-231"/>
</dbReference>
<dbReference type="PDBsum" id="7MQZ"/>
<dbReference type="SMR" id="Q96BR5"/>
<dbReference type="BioGRID" id="122417">
    <property type="interactions" value="147"/>
</dbReference>
<dbReference type="FunCoup" id="Q96BR5">
    <property type="interactions" value="1511"/>
</dbReference>
<dbReference type="IntAct" id="Q96BR5">
    <property type="interactions" value="69"/>
</dbReference>
<dbReference type="MINT" id="Q96BR5"/>
<dbReference type="STRING" id="9606.ENSP00000360593"/>
<dbReference type="GlyGen" id="Q96BR5">
    <property type="glycosylation" value="1 site, 1 O-linked glycan (1 site)"/>
</dbReference>
<dbReference type="iPTMnet" id="Q96BR5"/>
<dbReference type="PhosphoSitePlus" id="Q96BR5"/>
<dbReference type="SwissPalm" id="Q96BR5"/>
<dbReference type="BioMuta" id="COA7"/>
<dbReference type="DMDM" id="223590164"/>
<dbReference type="jPOST" id="Q96BR5"/>
<dbReference type="MassIVE" id="Q96BR5"/>
<dbReference type="PaxDb" id="9606-ENSP00000360593"/>
<dbReference type="PeptideAtlas" id="Q96BR5"/>
<dbReference type="ProteomicsDB" id="76102"/>
<dbReference type="Pumba" id="Q96BR5"/>
<dbReference type="Antibodypedia" id="33027">
    <property type="antibodies" value="99 antibodies from 15 providers"/>
</dbReference>
<dbReference type="DNASU" id="65260"/>
<dbReference type="Ensembl" id="ENST00000371538.5">
    <property type="protein sequence ID" value="ENSP00000360593.3"/>
    <property type="gene ID" value="ENSG00000162377.6"/>
</dbReference>
<dbReference type="GeneID" id="65260"/>
<dbReference type="KEGG" id="hsa:65260"/>
<dbReference type="MANE-Select" id="ENST00000371538.5">
    <property type="protein sequence ID" value="ENSP00000360593.3"/>
    <property type="RefSeq nucleotide sequence ID" value="NM_023077.3"/>
    <property type="RefSeq protein sequence ID" value="NP_075565.2"/>
</dbReference>
<dbReference type="UCSC" id="uc001cui.3">
    <property type="organism name" value="human"/>
</dbReference>
<dbReference type="AGR" id="HGNC:25716"/>
<dbReference type="CTD" id="65260"/>
<dbReference type="DisGeNET" id="65260"/>
<dbReference type="GeneCards" id="COA7"/>
<dbReference type="HGNC" id="HGNC:25716">
    <property type="gene designation" value="COA7"/>
</dbReference>
<dbReference type="HPA" id="ENSG00000162377">
    <property type="expression patterns" value="Low tissue specificity"/>
</dbReference>
<dbReference type="MalaCards" id="COA7"/>
<dbReference type="MIM" id="615623">
    <property type="type" value="gene"/>
</dbReference>
<dbReference type="MIM" id="618387">
    <property type="type" value="phenotype"/>
</dbReference>
<dbReference type="neXtProt" id="NX_Q96BR5"/>
<dbReference type="OpenTargets" id="ENSG00000162377"/>
<dbReference type="PharmGKB" id="PA142672414"/>
<dbReference type="VEuPathDB" id="HostDB:ENSG00000162377"/>
<dbReference type="eggNOG" id="KOG4014">
    <property type="taxonomic scope" value="Eukaryota"/>
</dbReference>
<dbReference type="GeneTree" id="ENSGT00390000004835"/>
<dbReference type="HOGENOM" id="CLU_000288_36_9_1"/>
<dbReference type="InParanoid" id="Q96BR5"/>
<dbReference type="OMA" id="PGCINAG"/>
<dbReference type="OrthoDB" id="272077at2759"/>
<dbReference type="PAN-GO" id="Q96BR5">
    <property type="GO annotations" value="1 GO annotation based on evolutionary models"/>
</dbReference>
<dbReference type="PhylomeDB" id="Q96BR5"/>
<dbReference type="TreeFam" id="TF105805"/>
<dbReference type="PathwayCommons" id="Q96BR5"/>
<dbReference type="SignaLink" id="Q96BR5"/>
<dbReference type="BioGRID-ORCS" id="65260">
    <property type="hits" value="367 hits in 1157 CRISPR screens"/>
</dbReference>
<dbReference type="ChiTaRS" id="COA7">
    <property type="organism name" value="human"/>
</dbReference>
<dbReference type="GenomeRNAi" id="65260"/>
<dbReference type="Pharos" id="Q96BR5">
    <property type="development level" value="Tbio"/>
</dbReference>
<dbReference type="PRO" id="PR:Q96BR5"/>
<dbReference type="Proteomes" id="UP000005640">
    <property type="component" value="Chromosome 1"/>
</dbReference>
<dbReference type="RNAct" id="Q96BR5">
    <property type="molecule type" value="protein"/>
</dbReference>
<dbReference type="Bgee" id="ENSG00000162377">
    <property type="expression patterns" value="Expressed in secondary oocyte and 201 other cell types or tissues"/>
</dbReference>
<dbReference type="GO" id="GO:0005758">
    <property type="term" value="C:mitochondrial intermembrane space"/>
    <property type="evidence" value="ECO:0000314"/>
    <property type="project" value="UniProtKB"/>
</dbReference>
<dbReference type="GO" id="GO:0005739">
    <property type="term" value="C:mitochondrion"/>
    <property type="evidence" value="ECO:0000314"/>
    <property type="project" value="HPA"/>
</dbReference>
<dbReference type="GO" id="GO:0005654">
    <property type="term" value="C:nucleoplasm"/>
    <property type="evidence" value="ECO:0000314"/>
    <property type="project" value="HPA"/>
</dbReference>
<dbReference type="GO" id="GO:0015035">
    <property type="term" value="F:protein-disulfide reductase activity"/>
    <property type="evidence" value="ECO:0000314"/>
    <property type="project" value="FlyBase"/>
</dbReference>
<dbReference type="GO" id="GO:0008535">
    <property type="term" value="P:respiratory chain complex IV assembly"/>
    <property type="evidence" value="ECO:0000315"/>
    <property type="project" value="FlyBase"/>
</dbReference>
<dbReference type="FunFam" id="1.25.40.10:FF:000401">
    <property type="entry name" value="Cytochrome c oxidase assembly factor 7"/>
    <property type="match status" value="1"/>
</dbReference>
<dbReference type="Gene3D" id="1.25.40.10">
    <property type="entry name" value="Tetratricopeptide repeat domain"/>
    <property type="match status" value="1"/>
</dbReference>
<dbReference type="InterPro" id="IPR040239">
    <property type="entry name" value="HcpB-like"/>
</dbReference>
<dbReference type="InterPro" id="IPR006597">
    <property type="entry name" value="Sel1-like"/>
</dbReference>
<dbReference type="InterPro" id="IPR011990">
    <property type="entry name" value="TPR-like_helical_dom_sf"/>
</dbReference>
<dbReference type="PANTHER" id="PTHR13891">
    <property type="entry name" value="CYTOCHROME C OXIDASE ASSEMBLY FACTOR 7"/>
    <property type="match status" value="1"/>
</dbReference>
<dbReference type="PANTHER" id="PTHR13891:SF1">
    <property type="entry name" value="CYTOCHROME C OXIDASE ASSEMBLY FACTOR 7"/>
    <property type="match status" value="1"/>
</dbReference>
<dbReference type="Pfam" id="PF08238">
    <property type="entry name" value="Sel1"/>
    <property type="match status" value="4"/>
</dbReference>
<dbReference type="SMART" id="SM00671">
    <property type="entry name" value="SEL1"/>
    <property type="match status" value="5"/>
</dbReference>
<dbReference type="SUPFAM" id="SSF81901">
    <property type="entry name" value="HCP-like"/>
    <property type="match status" value="1"/>
</dbReference>
<reference key="1">
    <citation type="journal article" date="2004" name="Nat. Genet.">
        <title>Complete sequencing and characterization of 21,243 full-length human cDNAs.</title>
        <authorList>
            <person name="Ota T."/>
            <person name="Suzuki Y."/>
            <person name="Nishikawa T."/>
            <person name="Otsuki T."/>
            <person name="Sugiyama T."/>
            <person name="Irie R."/>
            <person name="Wakamatsu A."/>
            <person name="Hayashi K."/>
            <person name="Sato H."/>
            <person name="Nagai K."/>
            <person name="Kimura K."/>
            <person name="Makita H."/>
            <person name="Sekine M."/>
            <person name="Obayashi M."/>
            <person name="Nishi T."/>
            <person name="Shibahara T."/>
            <person name="Tanaka T."/>
            <person name="Ishii S."/>
            <person name="Yamamoto J."/>
            <person name="Saito K."/>
            <person name="Kawai Y."/>
            <person name="Isono Y."/>
            <person name="Nakamura Y."/>
            <person name="Nagahari K."/>
            <person name="Murakami K."/>
            <person name="Yasuda T."/>
            <person name="Iwayanagi T."/>
            <person name="Wagatsuma M."/>
            <person name="Shiratori A."/>
            <person name="Sudo H."/>
            <person name="Hosoiri T."/>
            <person name="Kaku Y."/>
            <person name="Kodaira H."/>
            <person name="Kondo H."/>
            <person name="Sugawara M."/>
            <person name="Takahashi M."/>
            <person name="Kanda K."/>
            <person name="Yokoi T."/>
            <person name="Furuya T."/>
            <person name="Kikkawa E."/>
            <person name="Omura Y."/>
            <person name="Abe K."/>
            <person name="Kamihara K."/>
            <person name="Katsuta N."/>
            <person name="Sato K."/>
            <person name="Tanikawa M."/>
            <person name="Yamazaki M."/>
            <person name="Ninomiya K."/>
            <person name="Ishibashi T."/>
            <person name="Yamashita H."/>
            <person name="Murakawa K."/>
            <person name="Fujimori K."/>
            <person name="Tanai H."/>
            <person name="Kimata M."/>
            <person name="Watanabe M."/>
            <person name="Hiraoka S."/>
            <person name="Chiba Y."/>
            <person name="Ishida S."/>
            <person name="Ono Y."/>
            <person name="Takiguchi S."/>
            <person name="Watanabe S."/>
            <person name="Yosida M."/>
            <person name="Hotuta T."/>
            <person name="Kusano J."/>
            <person name="Kanehori K."/>
            <person name="Takahashi-Fujii A."/>
            <person name="Hara H."/>
            <person name="Tanase T.-O."/>
            <person name="Nomura Y."/>
            <person name="Togiya S."/>
            <person name="Komai F."/>
            <person name="Hara R."/>
            <person name="Takeuchi K."/>
            <person name="Arita M."/>
            <person name="Imose N."/>
            <person name="Musashino K."/>
            <person name="Yuuki H."/>
            <person name="Oshima A."/>
            <person name="Sasaki N."/>
            <person name="Aotsuka S."/>
            <person name="Yoshikawa Y."/>
            <person name="Matsunawa H."/>
            <person name="Ichihara T."/>
            <person name="Shiohata N."/>
            <person name="Sano S."/>
            <person name="Moriya S."/>
            <person name="Momiyama H."/>
            <person name="Satoh N."/>
            <person name="Takami S."/>
            <person name="Terashima Y."/>
            <person name="Suzuki O."/>
            <person name="Nakagawa S."/>
            <person name="Senoh A."/>
            <person name="Mizoguchi H."/>
            <person name="Goto Y."/>
            <person name="Shimizu F."/>
            <person name="Wakebe H."/>
            <person name="Hishigaki H."/>
            <person name="Watanabe T."/>
            <person name="Sugiyama A."/>
            <person name="Takemoto M."/>
            <person name="Kawakami B."/>
            <person name="Yamazaki M."/>
            <person name="Watanabe K."/>
            <person name="Kumagai A."/>
            <person name="Itakura S."/>
            <person name="Fukuzumi Y."/>
            <person name="Fujimori Y."/>
            <person name="Komiyama M."/>
            <person name="Tashiro H."/>
            <person name="Tanigami A."/>
            <person name="Fujiwara T."/>
            <person name="Ono T."/>
            <person name="Yamada K."/>
            <person name="Fujii Y."/>
            <person name="Ozaki K."/>
            <person name="Hirao M."/>
            <person name="Ohmori Y."/>
            <person name="Kawabata A."/>
            <person name="Hikiji T."/>
            <person name="Kobatake N."/>
            <person name="Inagaki H."/>
            <person name="Ikema Y."/>
            <person name="Okamoto S."/>
            <person name="Okitani R."/>
            <person name="Kawakami T."/>
            <person name="Noguchi S."/>
            <person name="Itoh T."/>
            <person name="Shigeta K."/>
            <person name="Senba T."/>
            <person name="Matsumura K."/>
            <person name="Nakajima Y."/>
            <person name="Mizuno T."/>
            <person name="Morinaga M."/>
            <person name="Sasaki M."/>
            <person name="Togashi T."/>
            <person name="Oyama M."/>
            <person name="Hata H."/>
            <person name="Watanabe M."/>
            <person name="Komatsu T."/>
            <person name="Mizushima-Sugano J."/>
            <person name="Satoh T."/>
            <person name="Shirai Y."/>
            <person name="Takahashi Y."/>
            <person name="Nakagawa K."/>
            <person name="Okumura K."/>
            <person name="Nagase T."/>
            <person name="Nomura N."/>
            <person name="Kikuchi H."/>
            <person name="Masuho Y."/>
            <person name="Yamashita R."/>
            <person name="Nakai K."/>
            <person name="Yada T."/>
            <person name="Nakamura Y."/>
            <person name="Ohara O."/>
            <person name="Isogai T."/>
            <person name="Sugano S."/>
        </authorList>
    </citation>
    <scope>NUCLEOTIDE SEQUENCE [LARGE SCALE MRNA]</scope>
    <scope>VARIANT ARG-219</scope>
    <source>
        <tissue>Teratocarcinoma</tissue>
    </source>
</reference>
<reference key="2">
    <citation type="journal article" date="2006" name="Nature">
        <title>The DNA sequence and biological annotation of human chromosome 1.</title>
        <authorList>
            <person name="Gregory S.G."/>
            <person name="Barlow K.F."/>
            <person name="McLay K.E."/>
            <person name="Kaul R."/>
            <person name="Swarbreck D."/>
            <person name="Dunham A."/>
            <person name="Scott C.E."/>
            <person name="Howe K.L."/>
            <person name="Woodfine K."/>
            <person name="Spencer C.C.A."/>
            <person name="Jones M.C."/>
            <person name="Gillson C."/>
            <person name="Searle S."/>
            <person name="Zhou Y."/>
            <person name="Kokocinski F."/>
            <person name="McDonald L."/>
            <person name="Evans R."/>
            <person name="Phillips K."/>
            <person name="Atkinson A."/>
            <person name="Cooper R."/>
            <person name="Jones C."/>
            <person name="Hall R.E."/>
            <person name="Andrews T.D."/>
            <person name="Lloyd C."/>
            <person name="Ainscough R."/>
            <person name="Almeida J.P."/>
            <person name="Ambrose K.D."/>
            <person name="Anderson F."/>
            <person name="Andrew R.W."/>
            <person name="Ashwell R.I.S."/>
            <person name="Aubin K."/>
            <person name="Babbage A.K."/>
            <person name="Bagguley C.L."/>
            <person name="Bailey J."/>
            <person name="Beasley H."/>
            <person name="Bethel G."/>
            <person name="Bird C.P."/>
            <person name="Bray-Allen S."/>
            <person name="Brown J.Y."/>
            <person name="Brown A.J."/>
            <person name="Buckley D."/>
            <person name="Burton J."/>
            <person name="Bye J."/>
            <person name="Carder C."/>
            <person name="Chapman J.C."/>
            <person name="Clark S.Y."/>
            <person name="Clarke G."/>
            <person name="Clee C."/>
            <person name="Cobley V."/>
            <person name="Collier R.E."/>
            <person name="Corby N."/>
            <person name="Coville G.J."/>
            <person name="Davies J."/>
            <person name="Deadman R."/>
            <person name="Dunn M."/>
            <person name="Earthrowl M."/>
            <person name="Ellington A.G."/>
            <person name="Errington H."/>
            <person name="Frankish A."/>
            <person name="Frankland J."/>
            <person name="French L."/>
            <person name="Garner P."/>
            <person name="Garnett J."/>
            <person name="Gay L."/>
            <person name="Ghori M.R.J."/>
            <person name="Gibson R."/>
            <person name="Gilby L.M."/>
            <person name="Gillett W."/>
            <person name="Glithero R.J."/>
            <person name="Grafham D.V."/>
            <person name="Griffiths C."/>
            <person name="Griffiths-Jones S."/>
            <person name="Grocock R."/>
            <person name="Hammond S."/>
            <person name="Harrison E.S.I."/>
            <person name="Hart E."/>
            <person name="Haugen E."/>
            <person name="Heath P.D."/>
            <person name="Holmes S."/>
            <person name="Holt K."/>
            <person name="Howden P.J."/>
            <person name="Hunt A.R."/>
            <person name="Hunt S.E."/>
            <person name="Hunter G."/>
            <person name="Isherwood J."/>
            <person name="James R."/>
            <person name="Johnson C."/>
            <person name="Johnson D."/>
            <person name="Joy A."/>
            <person name="Kay M."/>
            <person name="Kershaw J.K."/>
            <person name="Kibukawa M."/>
            <person name="Kimberley A.M."/>
            <person name="King A."/>
            <person name="Knights A.J."/>
            <person name="Lad H."/>
            <person name="Laird G."/>
            <person name="Lawlor S."/>
            <person name="Leongamornlert D.A."/>
            <person name="Lloyd D.M."/>
            <person name="Loveland J."/>
            <person name="Lovell J."/>
            <person name="Lush M.J."/>
            <person name="Lyne R."/>
            <person name="Martin S."/>
            <person name="Mashreghi-Mohammadi M."/>
            <person name="Matthews L."/>
            <person name="Matthews N.S.W."/>
            <person name="McLaren S."/>
            <person name="Milne S."/>
            <person name="Mistry S."/>
            <person name="Moore M.J.F."/>
            <person name="Nickerson T."/>
            <person name="O'Dell C.N."/>
            <person name="Oliver K."/>
            <person name="Palmeiri A."/>
            <person name="Palmer S.A."/>
            <person name="Parker A."/>
            <person name="Patel D."/>
            <person name="Pearce A.V."/>
            <person name="Peck A.I."/>
            <person name="Pelan S."/>
            <person name="Phelps K."/>
            <person name="Phillimore B.J."/>
            <person name="Plumb R."/>
            <person name="Rajan J."/>
            <person name="Raymond C."/>
            <person name="Rouse G."/>
            <person name="Saenphimmachak C."/>
            <person name="Sehra H.K."/>
            <person name="Sheridan E."/>
            <person name="Shownkeen R."/>
            <person name="Sims S."/>
            <person name="Skuce C.D."/>
            <person name="Smith M."/>
            <person name="Steward C."/>
            <person name="Subramanian S."/>
            <person name="Sycamore N."/>
            <person name="Tracey A."/>
            <person name="Tromans A."/>
            <person name="Van Helmond Z."/>
            <person name="Wall M."/>
            <person name="Wallis J.M."/>
            <person name="White S."/>
            <person name="Whitehead S.L."/>
            <person name="Wilkinson J.E."/>
            <person name="Willey D.L."/>
            <person name="Williams H."/>
            <person name="Wilming L."/>
            <person name="Wray P.W."/>
            <person name="Wu Z."/>
            <person name="Coulson A."/>
            <person name="Vaudin M."/>
            <person name="Sulston J.E."/>
            <person name="Durbin R.M."/>
            <person name="Hubbard T."/>
            <person name="Wooster R."/>
            <person name="Dunham I."/>
            <person name="Carter N.P."/>
            <person name="McVean G."/>
            <person name="Ross M.T."/>
            <person name="Harrow J."/>
            <person name="Olson M.V."/>
            <person name="Beck S."/>
            <person name="Rogers J."/>
            <person name="Bentley D.R."/>
        </authorList>
    </citation>
    <scope>NUCLEOTIDE SEQUENCE [LARGE SCALE GENOMIC DNA]</scope>
</reference>
<reference key="3">
    <citation type="journal article" date="2004" name="Genome Res.">
        <title>The status, quality, and expansion of the NIH full-length cDNA project: the Mammalian Gene Collection (MGC).</title>
        <authorList>
            <consortium name="The MGC Project Team"/>
        </authorList>
    </citation>
    <scope>NUCLEOTIDE SEQUENCE [LARGE SCALE MRNA]</scope>
    <scope>VARIANT ARG-219</scope>
    <source>
        <tissue>Bone marrow</tissue>
        <tissue>Prostate</tissue>
    </source>
</reference>
<reference key="4">
    <citation type="journal article" date="2009" name="Anal. Chem.">
        <title>Lys-N and trypsin cover complementary parts of the phosphoproteome in a refined SCX-based approach.</title>
        <authorList>
            <person name="Gauci S."/>
            <person name="Helbig A.O."/>
            <person name="Slijper M."/>
            <person name="Krijgsveld J."/>
            <person name="Heck A.J."/>
            <person name="Mohammed S."/>
        </authorList>
    </citation>
    <scope>ACETYLATION [LARGE SCALE ANALYSIS] AT ALA-2</scope>
    <scope>CLEAVAGE OF INITIATOR METHIONINE [LARGE SCALE ANALYSIS]</scope>
    <scope>IDENTIFICATION BY MASS SPECTROMETRY [LARGE SCALE ANALYSIS]</scope>
</reference>
<reference key="5">
    <citation type="journal article" date="2011" name="BMC Syst. Biol.">
        <title>Initial characterization of the human central proteome.</title>
        <authorList>
            <person name="Burkard T.R."/>
            <person name="Planyavsky M."/>
            <person name="Kaupe I."/>
            <person name="Breitwieser F.P."/>
            <person name="Buerckstuemmer T."/>
            <person name="Bennett K.L."/>
            <person name="Superti-Furga G."/>
            <person name="Colinge J."/>
        </authorList>
    </citation>
    <scope>IDENTIFICATION BY MASS SPECTROMETRY [LARGE SCALE ANALYSIS]</scope>
</reference>
<reference key="6">
    <citation type="journal article" date="2014" name="J. Mol. Biol.">
        <title>C1orf163/RESA1 is a novel mitochondrial intermembrane space protein connected to respiratory chain assembly.</title>
        <authorList>
            <person name="Kozjak-Pavlovic V."/>
            <person name="Prell F."/>
            <person name="Thiede B."/>
            <person name="Gotz M."/>
            <person name="Wosiek D."/>
            <person name="Ott C."/>
            <person name="Rudel T."/>
        </authorList>
    </citation>
    <scope>FUNCTION</scope>
    <scope>SUBCELLULAR LOCATION</scope>
</reference>
<reference key="7">
    <citation type="journal article" date="2015" name="Proteomics">
        <title>N-terminome analysis of the human mitochondrial proteome.</title>
        <authorList>
            <person name="Vaca Jacome A.S."/>
            <person name="Rabilloud T."/>
            <person name="Schaeffer-Reiss C."/>
            <person name="Rompais M."/>
            <person name="Ayoub D."/>
            <person name="Lane L."/>
            <person name="Bairoch A."/>
            <person name="Van Dorsselaer A."/>
            <person name="Carapito C."/>
        </authorList>
    </citation>
    <scope>IDENTIFICATION BY MASS SPECTROMETRY [LARGE SCALE ANALYSIS]</scope>
</reference>
<reference key="8">
    <citation type="journal article" date="2016" name="J. Med. Genet.">
        <title>COA7 (C1orf163/RESA1) mutations associated with mitochondrial leukoencephalopathy and cytochrome c oxidase deficiency.</title>
        <authorList>
            <person name="Martinez Lyons A."/>
            <person name="Ardissone A."/>
            <person name="Reyes A."/>
            <person name="Robinson A.J."/>
            <person name="Moroni I."/>
            <person name="Ghezzi D."/>
            <person name="Fernandez-Vizarra E."/>
            <person name="Zeviani M."/>
        </authorList>
    </citation>
    <scope>INVOLVEMENT IN SCAN3</scope>
    <scope>VARIANT SCAN3 CYS-137</scope>
</reference>
<reference key="9">
    <citation type="journal article" date="2018" name="Brain">
        <title>Mutations in COA7 cause spinocerebellar ataxia with axonal neuropathy.</title>
        <authorList>
            <person name="Higuchi Y."/>
            <person name="Okunushi R."/>
            <person name="Hara T."/>
            <person name="Hashiguchi A."/>
            <person name="Yuan J."/>
            <person name="Yoshimura A."/>
            <person name="Murayama K."/>
            <person name="Ohtake A."/>
            <person name="Ando M."/>
            <person name="Hiramatsu Y."/>
            <person name="Ishihara S."/>
            <person name="Tanabe H."/>
            <person name="Okamoto Y."/>
            <person name="Matsuura E."/>
            <person name="Ueda T."/>
            <person name="Toda T."/>
            <person name="Yamashita S."/>
            <person name="Yamada K."/>
            <person name="Koide T."/>
            <person name="Yaguchi H."/>
            <person name="Mitsui J."/>
            <person name="Ishiura H."/>
            <person name="Yoshimura J."/>
            <person name="Doi K."/>
            <person name="Morishita S."/>
            <person name="Sato K."/>
            <person name="Nakagawa M."/>
            <person name="Yamaguchi M."/>
            <person name="Tsuji S."/>
            <person name="Takashima H."/>
        </authorList>
    </citation>
    <scope>INVOLVEMENT IN SCAN3</scope>
    <scope>VARIANTS SCAN3 GLY-6; TRP-39 AND ILE-149</scope>
</reference>
<reference key="10">
    <citation type="journal article" date="2019" name="EMBO Mol. Med.">
        <title>Inhibition of proteasome rescues a pathogenic variant of respiratory chain assembly factor COA7.</title>
        <authorList>
            <person name="Mohanraj K."/>
            <person name="Wasilewski M."/>
            <person name="Beninca C."/>
            <person name="Cysewski D."/>
            <person name="Poznanski J."/>
            <person name="Sakowska P."/>
            <person name="Bugajska Z."/>
            <person name="Deckers M."/>
            <person name="Dennerlein S."/>
            <person name="Fernandez-Vizarra E."/>
            <person name="Rehling P."/>
            <person name="Dadlez M."/>
            <person name="Zeviani M."/>
            <person name="Chacinska A."/>
        </authorList>
    </citation>
    <scope>INTERACTION WITH CHCHD4</scope>
    <scope>SUBCELLULAR LOCATION</scope>
    <scope>CHARACTERIZATION OF VARIANT SCAN3 CYS-137</scope>
</reference>
<keyword id="KW-0002">3D-structure</keyword>
<keyword id="KW-0007">Acetylation</keyword>
<keyword id="KW-0225">Disease variant</keyword>
<keyword id="KW-0496">Mitochondrion</keyword>
<keyword id="KW-0523">Neurodegeneration</keyword>
<keyword id="KW-0622">Neuropathy</keyword>
<keyword id="KW-1267">Proteomics identification</keyword>
<keyword id="KW-1185">Reference proteome</keyword>
<keyword id="KW-0677">Repeat</keyword>
<proteinExistence type="evidence at protein level"/>
<organism>
    <name type="scientific">Homo sapiens</name>
    <name type="common">Human</name>
    <dbReference type="NCBI Taxonomy" id="9606"/>
    <lineage>
        <taxon>Eukaryota</taxon>
        <taxon>Metazoa</taxon>
        <taxon>Chordata</taxon>
        <taxon>Craniata</taxon>
        <taxon>Vertebrata</taxon>
        <taxon>Euteleostomi</taxon>
        <taxon>Mammalia</taxon>
        <taxon>Eutheria</taxon>
        <taxon>Euarchontoglires</taxon>
        <taxon>Primates</taxon>
        <taxon>Haplorrhini</taxon>
        <taxon>Catarrhini</taxon>
        <taxon>Hominidae</taxon>
        <taxon>Homo</taxon>
    </lineage>
</organism>
<gene>
    <name type="primary">COA7</name>
    <name type="synonym">C1orf163</name>
    <name type="synonym">RESA1</name>
    <name type="synonym">SELRC1</name>
</gene>